<dbReference type="EC" id="5.6.2.2" evidence="3"/>
<dbReference type="EMBL" id="M91165">
    <property type="protein sequence ID" value="AAA85575.1"/>
    <property type="molecule type" value="Genomic_DNA"/>
</dbReference>
<dbReference type="PIR" id="A48446">
    <property type="entry name" value="A48446"/>
</dbReference>
<dbReference type="SMR" id="P30190"/>
<dbReference type="VEuPathDB" id="TriTrypDB:BCY84_02073"/>
<dbReference type="VEuPathDB" id="TriTrypDB:C3747_112g72"/>
<dbReference type="VEuPathDB" id="TriTrypDB:C4B63_26g233"/>
<dbReference type="VEuPathDB" id="TriTrypDB:ECC02_004723"/>
<dbReference type="VEuPathDB" id="TriTrypDB:Tc_MARK_5797"/>
<dbReference type="VEuPathDB" id="TriTrypDB:Tc_MARK_5798"/>
<dbReference type="VEuPathDB" id="TriTrypDB:TcBrA4_0119150"/>
<dbReference type="VEuPathDB" id="TriTrypDB:TcCL_ESM04813"/>
<dbReference type="VEuPathDB" id="TriTrypDB:TcCLB.506445.60"/>
<dbReference type="VEuPathDB" id="TriTrypDB:TcCLB.508277.370"/>
<dbReference type="VEuPathDB" id="TriTrypDB:TCDM_03128"/>
<dbReference type="VEuPathDB" id="TriTrypDB:TcG_04548"/>
<dbReference type="VEuPathDB" id="TriTrypDB:TCSYLVIO_007048"/>
<dbReference type="VEuPathDB" id="TriTrypDB:TcYC6_0012170"/>
<dbReference type="GO" id="GO:0005634">
    <property type="term" value="C:nucleus"/>
    <property type="evidence" value="ECO:0007669"/>
    <property type="project" value="UniProtKB-SubCell"/>
</dbReference>
<dbReference type="GO" id="GO:0005524">
    <property type="term" value="F:ATP binding"/>
    <property type="evidence" value="ECO:0007669"/>
    <property type="project" value="UniProtKB-KW"/>
</dbReference>
<dbReference type="GO" id="GO:0003677">
    <property type="term" value="F:DNA binding"/>
    <property type="evidence" value="ECO:0007669"/>
    <property type="project" value="UniProtKB-KW"/>
</dbReference>
<dbReference type="GO" id="GO:0003918">
    <property type="term" value="F:DNA topoisomerase type II (double strand cut, ATP-hydrolyzing) activity"/>
    <property type="evidence" value="ECO:0007669"/>
    <property type="project" value="UniProtKB-EC"/>
</dbReference>
<dbReference type="GO" id="GO:0046872">
    <property type="term" value="F:metal ion binding"/>
    <property type="evidence" value="ECO:0007669"/>
    <property type="project" value="UniProtKB-KW"/>
</dbReference>
<dbReference type="GO" id="GO:0006265">
    <property type="term" value="P:DNA topological change"/>
    <property type="evidence" value="ECO:0007669"/>
    <property type="project" value="InterPro"/>
</dbReference>
<dbReference type="GO" id="GO:0000712">
    <property type="term" value="P:resolution of meiotic recombination intermediates"/>
    <property type="evidence" value="ECO:0007669"/>
    <property type="project" value="TreeGrafter"/>
</dbReference>
<dbReference type="GO" id="GO:0000819">
    <property type="term" value="P:sister chromatid segregation"/>
    <property type="evidence" value="ECO:0007669"/>
    <property type="project" value="TreeGrafter"/>
</dbReference>
<dbReference type="CDD" id="cd00187">
    <property type="entry name" value="TOP4c"/>
    <property type="match status" value="1"/>
</dbReference>
<dbReference type="FunFam" id="3.30.565.10:FF:000092">
    <property type="entry name" value="DNA topoisomerase 2"/>
    <property type="match status" value="1"/>
</dbReference>
<dbReference type="FunFam" id="3.40.50.670:FF:000001">
    <property type="entry name" value="DNA topoisomerase 2"/>
    <property type="match status" value="1"/>
</dbReference>
<dbReference type="FunFam" id="3.90.199.10:FF:000002">
    <property type="entry name" value="DNA topoisomerase 2"/>
    <property type="match status" value="1"/>
</dbReference>
<dbReference type="Gene3D" id="3.30.1360.40">
    <property type="match status" value="1"/>
</dbReference>
<dbReference type="Gene3D" id="3.30.1490.30">
    <property type="match status" value="1"/>
</dbReference>
<dbReference type="Gene3D" id="3.30.230.10">
    <property type="match status" value="1"/>
</dbReference>
<dbReference type="Gene3D" id="3.40.50.670">
    <property type="match status" value="1"/>
</dbReference>
<dbReference type="Gene3D" id="3.30.565.10">
    <property type="entry name" value="Histidine kinase-like ATPase, C-terminal domain"/>
    <property type="match status" value="1"/>
</dbReference>
<dbReference type="Gene3D" id="3.90.199.10">
    <property type="entry name" value="Topoisomerase II, domain 5"/>
    <property type="match status" value="1"/>
</dbReference>
<dbReference type="Gene3D" id="1.10.268.10">
    <property type="entry name" value="Topoisomerase, domain 3"/>
    <property type="match status" value="1"/>
</dbReference>
<dbReference type="InterPro" id="IPR050634">
    <property type="entry name" value="DNA_Topoisomerase_II"/>
</dbReference>
<dbReference type="InterPro" id="IPR036890">
    <property type="entry name" value="HATPase_C_sf"/>
</dbReference>
<dbReference type="InterPro" id="IPR020568">
    <property type="entry name" value="Ribosomal_Su5_D2-typ_SF"/>
</dbReference>
<dbReference type="InterPro" id="IPR014721">
    <property type="entry name" value="Ribsml_uS5_D2-typ_fold_subgr"/>
</dbReference>
<dbReference type="InterPro" id="IPR001241">
    <property type="entry name" value="Topo_IIA"/>
</dbReference>
<dbReference type="InterPro" id="IPR013760">
    <property type="entry name" value="Topo_IIA-like_dom_sf"/>
</dbReference>
<dbReference type="InterPro" id="IPR013758">
    <property type="entry name" value="Topo_IIA_A/C_ab"/>
</dbReference>
<dbReference type="InterPro" id="IPR013757">
    <property type="entry name" value="Topo_IIA_A_a_sf"/>
</dbReference>
<dbReference type="InterPro" id="IPR013759">
    <property type="entry name" value="Topo_IIA_B_C"/>
</dbReference>
<dbReference type="InterPro" id="IPR013506">
    <property type="entry name" value="Topo_IIA_bsu_dom2"/>
</dbReference>
<dbReference type="InterPro" id="IPR002205">
    <property type="entry name" value="Topo_IIA_dom_A"/>
</dbReference>
<dbReference type="InterPro" id="IPR001154">
    <property type="entry name" value="TopoII_euk"/>
</dbReference>
<dbReference type="InterPro" id="IPR018522">
    <property type="entry name" value="TopoIIA_CS"/>
</dbReference>
<dbReference type="InterPro" id="IPR031660">
    <property type="entry name" value="TOPRIM_C"/>
</dbReference>
<dbReference type="InterPro" id="IPR006171">
    <property type="entry name" value="TOPRIM_dom"/>
</dbReference>
<dbReference type="PANTHER" id="PTHR10169:SF50">
    <property type="entry name" value="DNA TOPOISOMERASE 2"/>
    <property type="match status" value="1"/>
</dbReference>
<dbReference type="PANTHER" id="PTHR10169">
    <property type="entry name" value="DNA TOPOISOMERASE/GYRASE"/>
    <property type="match status" value="1"/>
</dbReference>
<dbReference type="Pfam" id="PF00204">
    <property type="entry name" value="DNA_gyraseB"/>
    <property type="match status" value="1"/>
</dbReference>
<dbReference type="Pfam" id="PF00521">
    <property type="entry name" value="DNA_topoisoIV"/>
    <property type="match status" value="1"/>
</dbReference>
<dbReference type="Pfam" id="PF01751">
    <property type="entry name" value="Toprim"/>
    <property type="match status" value="1"/>
</dbReference>
<dbReference type="Pfam" id="PF16898">
    <property type="entry name" value="TOPRIM_C"/>
    <property type="match status" value="1"/>
</dbReference>
<dbReference type="PRINTS" id="PR01158">
    <property type="entry name" value="TOPISMRASEII"/>
</dbReference>
<dbReference type="PRINTS" id="PR00418">
    <property type="entry name" value="TPI2FAMILY"/>
</dbReference>
<dbReference type="SMART" id="SM00433">
    <property type="entry name" value="TOP2c"/>
    <property type="match status" value="1"/>
</dbReference>
<dbReference type="SMART" id="SM00434">
    <property type="entry name" value="TOP4c"/>
    <property type="match status" value="1"/>
</dbReference>
<dbReference type="SUPFAM" id="SSF55874">
    <property type="entry name" value="ATPase domain of HSP90 chaperone/DNA topoisomerase II/histidine kinase"/>
    <property type="match status" value="1"/>
</dbReference>
<dbReference type="SUPFAM" id="SSF54211">
    <property type="entry name" value="Ribosomal protein S5 domain 2-like"/>
    <property type="match status" value="1"/>
</dbReference>
<dbReference type="SUPFAM" id="SSF56719">
    <property type="entry name" value="Type II DNA topoisomerase"/>
    <property type="match status" value="1"/>
</dbReference>
<dbReference type="PROSITE" id="PS52040">
    <property type="entry name" value="TOPO_IIA"/>
    <property type="match status" value="1"/>
</dbReference>
<dbReference type="PROSITE" id="PS00177">
    <property type="entry name" value="TOPOISOMERASE_II"/>
    <property type="match status" value="1"/>
</dbReference>
<dbReference type="PROSITE" id="PS50880">
    <property type="entry name" value="TOPRIM"/>
    <property type="match status" value="1"/>
</dbReference>
<comment type="function">
    <text>Control of topological states of DNA by transient breakage and subsequent rejoining of DNA strands. Topoisomerase II makes double-strand breaks.</text>
</comment>
<comment type="catalytic activity">
    <reaction evidence="3">
        <text>ATP-dependent breakage, passage and rejoining of double-stranded DNA.</text>
        <dbReference type="EC" id="5.6.2.2"/>
    </reaction>
</comment>
<comment type="cofactor">
    <cofactor evidence="3">
        <name>Mg(2+)</name>
        <dbReference type="ChEBI" id="CHEBI:18420"/>
    </cofactor>
    <cofactor evidence="3">
        <name>Mn(2+)</name>
        <dbReference type="ChEBI" id="CHEBI:29035"/>
    </cofactor>
    <cofactor evidence="3">
        <name>Ca(2+)</name>
        <dbReference type="ChEBI" id="CHEBI:29108"/>
    </cofactor>
    <text evidence="3">Binds two Mg(2+) per subunit. The magnesium ions form salt bridges with both the protein and the DNA. Can also accept other divalent metal cations, such as Mn(2+) or Ca(2+).</text>
</comment>
<comment type="subunit">
    <text>Homodimer.</text>
</comment>
<comment type="subcellular location">
    <subcellularLocation>
        <location>Nucleus</location>
    </subcellularLocation>
</comment>
<comment type="miscellaneous">
    <text>Eukaryotic topoisomerase I and II can relax both negative and positive supercoils, whereas prokaryotic enzymes relax only negative supercoils.</text>
</comment>
<comment type="similarity">
    <text evidence="6">Belongs to the type II topoisomerase family.</text>
</comment>
<name>TOP2_TRYCR</name>
<evidence type="ECO:0000250" key="1"/>
<evidence type="ECO:0000250" key="2">
    <source>
        <dbReference type="UniProtKB" id="P11388"/>
    </source>
</evidence>
<evidence type="ECO:0000255" key="3">
    <source>
        <dbReference type="PROSITE-ProRule" id="PRU00995"/>
    </source>
</evidence>
<evidence type="ECO:0000255" key="4">
    <source>
        <dbReference type="PROSITE-ProRule" id="PRU01384"/>
    </source>
</evidence>
<evidence type="ECO:0000256" key="5">
    <source>
        <dbReference type="SAM" id="MobiDB-lite"/>
    </source>
</evidence>
<evidence type="ECO:0000305" key="6"/>
<organism>
    <name type="scientific">Trypanosoma cruzi</name>
    <dbReference type="NCBI Taxonomy" id="5693"/>
    <lineage>
        <taxon>Eukaryota</taxon>
        <taxon>Discoba</taxon>
        <taxon>Euglenozoa</taxon>
        <taxon>Kinetoplastea</taxon>
        <taxon>Metakinetoplastina</taxon>
        <taxon>Trypanosomatida</taxon>
        <taxon>Trypanosomatidae</taxon>
        <taxon>Trypanosoma</taxon>
        <taxon>Schizotrypanum</taxon>
    </lineage>
</organism>
<accession>P30190</accession>
<sequence length="1232" mass="138440">MAEASKYKKLTPIDHVLIRPEMYVGSVDTSSSSMFVFDHEKGRMVWESLKVNHGLLKIVDEILLNASDNIANKGGRMTYIRVHITEAGEITIENDGAGIPIVRSKEHKLYIPEMVFGHLLTSSNYDDTSQNAVAGRHGYGAKLTNILSHRFSVCCRTKGKEFHMSWHDHMRRATAPRVSNVDPKEKNLTRVKFLPDYERFGLDANKISHDMKRVLHKRIMDLAAMFPSIEISLNGVPFAFKSFADYAMLYSSPSSSGEMPPAPFVYESRNGAIAFIPSLTAGTRRIFGVVNGVVTHNGGTHCNAAQEVLQSSLESVEKALKKDNKVIDTNRVLRHFMILVFLVQVQPKFDSQNKARLVSVPTMPRVPRQELMDFLLRMPFLEAHVNTVTGQLADELNKEMGAGRRMSSKSLISSITKLVDATTTRRDPRFVRTLIVTEGDSAKALAQNSLSSDQKRYTGVFPLRGKLLNVRNKNLKRLKNCKELQELFCALGLELGKIYKDAEELRYQRLLVMTDQDADGSHIKGLVINAFEALWPSLLNRNPGFISIFSTPIVKVRLRDKSTHSFFSLKEFHKWQKTHGNVSYTAKYYKALGTSTTAEGKEYFKDMDKHTMRLVVERNDHKLLDSVFDSQEVEWRKDWMTKANAYTGEVDIDRSKKTLTVPDFVHKEMVHFALAGNARALAHAVDGLKPSQRKILWAIMRRSGNESAKVAQLSGYISEVSAFHHGEMSLQETIIKMAQNFTGGNNINLLIPEGQFGSRQQLGNDHAAARYIFTKLSSLARILFPSEDEPLLDYVTEEGQQVEPNHYVPILPLLLCNGSVGIGFGFASNIPPFHPLDVSAAVRSMINGEAAKVVVRRLVPWAVGYQGEVRRGPEGEFIAAGSYQYYVDGRVHVTEIPWTLSIEAFRDHISVLASKDVVQRIADYSGANHVDIDLELTNGAMTTYAECESELSLTQRIYINGTVFSPTGVLTPLEGDLAPVLQWHYDRRLDLYKKRRQRNLGLLEAELAREKSTLKFVTHFREGKIDIVNATDDSLAKTCSKLGMVRVDDSYDYVLRKPITFYTKTSLENLNRKISETEKRIDKLKKTAPVQMWLDELDRFDRAFEEHENTAVATILKERRVNPPTGDVSRNLQQPRLELEEVKVSSSGGKSVPMRVRVRKYVPPPPSKRPHVGQSVGGGGGGGSVRSSAAAVVAHVKAEKKAARARSMQKMLLDVVARQVARVLPRLPWFLF</sequence>
<keyword id="KW-0067">ATP-binding</keyword>
<keyword id="KW-0238">DNA-binding</keyword>
<keyword id="KW-0413">Isomerase</keyword>
<keyword id="KW-0460">Magnesium</keyword>
<keyword id="KW-0479">Metal-binding</keyword>
<keyword id="KW-0547">Nucleotide-binding</keyword>
<keyword id="KW-0539">Nucleus</keyword>
<keyword id="KW-0799">Topoisomerase</keyword>
<protein>
    <recommendedName>
        <fullName>DNA topoisomerase 2</fullName>
        <ecNumber evidence="3">5.6.2.2</ecNumber>
    </recommendedName>
    <alternativeName>
        <fullName>DNA topoisomerase II</fullName>
    </alternativeName>
</protein>
<proteinExistence type="inferred from homology"/>
<feature type="chain" id="PRO_0000145379" description="DNA topoisomerase 2">
    <location>
        <begin position="1"/>
        <end position="1232"/>
    </location>
</feature>
<feature type="domain" description="Toprim" evidence="3">
    <location>
        <begin position="432"/>
        <end position="546"/>
    </location>
</feature>
<feature type="domain" description="Topo IIA-type catalytic" evidence="4">
    <location>
        <begin position="681"/>
        <end position="1097"/>
    </location>
</feature>
<feature type="region of interest" description="Interaction with DNA" evidence="2">
    <location>
        <begin position="952"/>
        <end position="961"/>
    </location>
</feature>
<feature type="region of interest" description="Disordered" evidence="5">
    <location>
        <begin position="1161"/>
        <end position="1184"/>
    </location>
</feature>
<feature type="compositionally biased region" description="Gly residues" evidence="5">
    <location>
        <begin position="1175"/>
        <end position="1184"/>
    </location>
</feature>
<feature type="active site" description="O-(5'-phospho-DNA)-tyrosine intermediate" evidence="4">
    <location>
        <position position="771"/>
    </location>
</feature>
<feature type="binding site" evidence="2">
    <location>
        <position position="65"/>
    </location>
    <ligand>
        <name>ATP</name>
        <dbReference type="ChEBI" id="CHEBI:30616"/>
    </ligand>
</feature>
<feature type="binding site" evidence="2">
    <location>
        <position position="94"/>
    </location>
    <ligand>
        <name>ATP</name>
        <dbReference type="ChEBI" id="CHEBI:30616"/>
    </ligand>
</feature>
<feature type="binding site" evidence="2">
    <location>
        <begin position="122"/>
        <end position="124"/>
    </location>
    <ligand>
        <name>ATP</name>
        <dbReference type="ChEBI" id="CHEBI:30616"/>
    </ligand>
</feature>
<feature type="binding site" evidence="2">
    <location>
        <begin position="135"/>
        <end position="142"/>
    </location>
    <ligand>
        <name>ATP</name>
        <dbReference type="ChEBI" id="CHEBI:30616"/>
    </ligand>
</feature>
<feature type="binding site" evidence="2">
    <location>
        <begin position="352"/>
        <end position="354"/>
    </location>
    <ligand>
        <name>ATP</name>
        <dbReference type="ChEBI" id="CHEBI:30616"/>
    </ligand>
</feature>
<feature type="binding site" evidence="3">
    <location>
        <position position="438"/>
    </location>
    <ligand>
        <name>Mg(2+)</name>
        <dbReference type="ChEBI" id="CHEBI:18420"/>
        <label>1</label>
        <note>catalytic</note>
    </ligand>
</feature>
<feature type="binding site" evidence="3">
    <location>
        <position position="515"/>
    </location>
    <ligand>
        <name>Mg(2+)</name>
        <dbReference type="ChEBI" id="CHEBI:18420"/>
        <label>1</label>
        <note>catalytic</note>
    </ligand>
</feature>
<feature type="binding site" evidence="3">
    <location>
        <position position="515"/>
    </location>
    <ligand>
        <name>Mg(2+)</name>
        <dbReference type="ChEBI" id="CHEBI:18420"/>
        <label>2</label>
    </ligand>
</feature>
<feature type="binding site" evidence="3">
    <location>
        <position position="517"/>
    </location>
    <ligand>
        <name>Mg(2+)</name>
        <dbReference type="ChEBI" id="CHEBI:18420"/>
        <label>2</label>
    </ligand>
</feature>
<feature type="site" description="Interaction with DNA" evidence="3">
    <location>
        <position position="466"/>
    </location>
</feature>
<feature type="site" description="Interaction with DNA" evidence="3">
    <location>
        <position position="469"/>
    </location>
</feature>
<feature type="site" description="Interaction with DNA" evidence="3">
    <location>
        <position position="636"/>
    </location>
</feature>
<feature type="site" description="Interaction with DNA" evidence="3">
    <location>
        <position position="637"/>
    </location>
</feature>
<feature type="site" description="Interaction with DNA" evidence="3">
    <location>
        <position position="689"/>
    </location>
</feature>
<feature type="site" description="Interaction with DNA" evidence="3">
    <location>
        <position position="729"/>
    </location>
</feature>
<feature type="site" description="Transition state stabilizer" evidence="1">
    <location>
        <position position="770"/>
    </location>
</feature>
<feature type="site" description="Important for DNA bending; intercalates between base pairs of target DNA" evidence="1">
    <location>
        <position position="822"/>
    </location>
</feature>
<reference key="1">
    <citation type="journal article" date="1992" name="Mol. Biochem. Parasitol.">
        <title>Cloning and characterization of the gene encoding Trypanosoma cruzi DNA topoisomerase II.</title>
        <authorList>
            <person name="Fragoso S.P."/>
            <person name="Goldenberg S."/>
        </authorList>
    </citation>
    <scope>NUCLEOTIDE SEQUENCE [GENOMIC DNA]</scope>
</reference>
<gene>
    <name type="primary">TOP2</name>
</gene>